<reference key="1">
    <citation type="journal article" date="1998" name="Nature">
        <title>Deciphering the biology of Mycobacterium tuberculosis from the complete genome sequence.</title>
        <authorList>
            <person name="Cole S.T."/>
            <person name="Brosch R."/>
            <person name="Parkhill J."/>
            <person name="Garnier T."/>
            <person name="Churcher C.M."/>
            <person name="Harris D.E."/>
            <person name="Gordon S.V."/>
            <person name="Eiglmeier K."/>
            <person name="Gas S."/>
            <person name="Barry C.E. III"/>
            <person name="Tekaia F."/>
            <person name="Badcock K."/>
            <person name="Basham D."/>
            <person name="Brown D."/>
            <person name="Chillingworth T."/>
            <person name="Connor R."/>
            <person name="Davies R.M."/>
            <person name="Devlin K."/>
            <person name="Feltwell T."/>
            <person name="Gentles S."/>
            <person name="Hamlin N."/>
            <person name="Holroyd S."/>
            <person name="Hornsby T."/>
            <person name="Jagels K."/>
            <person name="Krogh A."/>
            <person name="McLean J."/>
            <person name="Moule S."/>
            <person name="Murphy L.D."/>
            <person name="Oliver S."/>
            <person name="Osborne J."/>
            <person name="Quail M.A."/>
            <person name="Rajandream M.A."/>
            <person name="Rogers J."/>
            <person name="Rutter S."/>
            <person name="Seeger K."/>
            <person name="Skelton S."/>
            <person name="Squares S."/>
            <person name="Squares R."/>
            <person name="Sulston J.E."/>
            <person name="Taylor K."/>
            <person name="Whitehead S."/>
            <person name="Barrell B.G."/>
        </authorList>
    </citation>
    <scope>NUCLEOTIDE SEQUENCE [LARGE SCALE GENOMIC DNA]</scope>
    <source>
        <strain>ATCC 25618 / H37Rv</strain>
    </source>
</reference>
<reference key="2">
    <citation type="journal article" date="2011" name="BMC Genomics">
        <title>Bioinformatic evidence for a widely distributed, ribosomally produced electron carrier precursor, its maturation proteins, and its nicotinoprotein redox partners.</title>
        <authorList>
            <person name="Haft D.H."/>
        </authorList>
    </citation>
    <scope>POSSIBLE FUNCTION</scope>
    <source>
        <strain>ATCC 25618 / H37Rv</strain>
    </source>
</reference>
<reference key="3">
    <citation type="journal article" date="2011" name="Mol. Cell. Proteomics">
        <title>Proteogenomic analysis of Mycobacterium tuberculosis by high resolution mass spectrometry.</title>
        <authorList>
            <person name="Kelkar D.S."/>
            <person name="Kumar D."/>
            <person name="Kumar P."/>
            <person name="Balakrishnan L."/>
            <person name="Muthusamy B."/>
            <person name="Yadav A.K."/>
            <person name="Shrivastava P."/>
            <person name="Marimuthu A."/>
            <person name="Anand S."/>
            <person name="Sundaram H."/>
            <person name="Kingsbury R."/>
            <person name="Harsha H.C."/>
            <person name="Nair B."/>
            <person name="Prasad T.S."/>
            <person name="Chauhan D.S."/>
            <person name="Katoch K."/>
            <person name="Katoch V.M."/>
            <person name="Kumar P."/>
            <person name="Chaerkady R."/>
            <person name="Ramachandran S."/>
            <person name="Dash D."/>
            <person name="Pandey A."/>
        </authorList>
    </citation>
    <scope>IDENTIFICATION BY MASS SPECTROMETRY [LARGE SCALE ANALYSIS]</scope>
    <source>
        <strain>ATCC 25618 / H37Rv</strain>
    </source>
</reference>
<dbReference type="EC" id="4.1.99.26" evidence="1"/>
<dbReference type="EC" id="1.3.98.7" evidence="1"/>
<dbReference type="EMBL" id="AL123456">
    <property type="protein sequence ID" value="CCP43437.1"/>
    <property type="molecule type" value="Genomic_DNA"/>
</dbReference>
<dbReference type="PIR" id="H70640">
    <property type="entry name" value="H70640"/>
</dbReference>
<dbReference type="RefSeq" id="NP_215207.1">
    <property type="nucleotide sequence ID" value="NC_000962.3"/>
</dbReference>
<dbReference type="RefSeq" id="WP_003403490.1">
    <property type="nucleotide sequence ID" value="NZ_NVQJ01000007.1"/>
</dbReference>
<dbReference type="SMR" id="P9WJ79"/>
<dbReference type="FunCoup" id="P9WJ79">
    <property type="interactions" value="2"/>
</dbReference>
<dbReference type="STRING" id="83332.Rv0693"/>
<dbReference type="PaxDb" id="83332-Rv0693"/>
<dbReference type="DNASU" id="888302"/>
<dbReference type="GeneID" id="888302"/>
<dbReference type="KEGG" id="mtu:Rv0693"/>
<dbReference type="KEGG" id="mtv:RVBD_0693"/>
<dbReference type="TubercuList" id="Rv0693"/>
<dbReference type="eggNOG" id="COG0535">
    <property type="taxonomic scope" value="Bacteria"/>
</dbReference>
<dbReference type="InParanoid" id="P9WJ79"/>
<dbReference type="OrthoDB" id="9782387at2"/>
<dbReference type="PhylomeDB" id="P9WJ79"/>
<dbReference type="BRENDA" id="1.3.98.7">
    <property type="organism ID" value="3445"/>
</dbReference>
<dbReference type="BRENDA" id="4.1.99.26">
    <property type="organism ID" value="3445"/>
</dbReference>
<dbReference type="Proteomes" id="UP000001584">
    <property type="component" value="Chromosome"/>
</dbReference>
<dbReference type="GO" id="GO:0005886">
    <property type="term" value="C:plasma membrane"/>
    <property type="evidence" value="ECO:0007005"/>
    <property type="project" value="MTBBASE"/>
</dbReference>
<dbReference type="GO" id="GO:0051539">
    <property type="term" value="F:4 iron, 4 sulfur cluster binding"/>
    <property type="evidence" value="ECO:0007669"/>
    <property type="project" value="UniProtKB-KW"/>
</dbReference>
<dbReference type="GO" id="GO:0016829">
    <property type="term" value="F:lyase activity"/>
    <property type="evidence" value="ECO:0007669"/>
    <property type="project" value="UniProtKB-KW"/>
</dbReference>
<dbReference type="GO" id="GO:0046872">
    <property type="term" value="F:metal ion binding"/>
    <property type="evidence" value="ECO:0007669"/>
    <property type="project" value="UniProtKB-KW"/>
</dbReference>
<dbReference type="GO" id="GO:0016491">
    <property type="term" value="F:oxidoreductase activity"/>
    <property type="evidence" value="ECO:0007669"/>
    <property type="project" value="UniProtKB-KW"/>
</dbReference>
<dbReference type="CDD" id="cd01335">
    <property type="entry name" value="Radical_SAM"/>
    <property type="match status" value="1"/>
</dbReference>
<dbReference type="CDD" id="cd21123">
    <property type="entry name" value="SPASM_MftC-like"/>
    <property type="match status" value="1"/>
</dbReference>
<dbReference type="FunFam" id="3.20.20.70:FF:000188">
    <property type="entry name" value="Mycofactocin radical SAM maturase MftC"/>
    <property type="match status" value="1"/>
</dbReference>
<dbReference type="Gene3D" id="3.20.20.70">
    <property type="entry name" value="Aldolase class I"/>
    <property type="match status" value="1"/>
</dbReference>
<dbReference type="InterPro" id="IPR023885">
    <property type="entry name" value="4Fe4S-binding_SPASM_dom"/>
</dbReference>
<dbReference type="InterPro" id="IPR013785">
    <property type="entry name" value="Aldolase_TIM"/>
</dbReference>
<dbReference type="InterPro" id="IPR034391">
    <property type="entry name" value="Cmo-like_SPASM_containing"/>
</dbReference>
<dbReference type="InterPro" id="IPR006638">
    <property type="entry name" value="Elp3/MiaA/NifB-like_rSAM"/>
</dbReference>
<dbReference type="InterPro" id="IPR023913">
    <property type="entry name" value="MftC"/>
</dbReference>
<dbReference type="InterPro" id="IPR017200">
    <property type="entry name" value="PqqE-like"/>
</dbReference>
<dbReference type="InterPro" id="IPR050377">
    <property type="entry name" value="Radical_SAM_PqqE_MftC-like"/>
</dbReference>
<dbReference type="InterPro" id="IPR007197">
    <property type="entry name" value="rSAM"/>
</dbReference>
<dbReference type="NCBIfam" id="TIGR03962">
    <property type="entry name" value="mycofact_rSAM"/>
    <property type="match status" value="1"/>
</dbReference>
<dbReference type="NCBIfam" id="TIGR04085">
    <property type="entry name" value="rSAM_more_4Fe4S"/>
    <property type="match status" value="1"/>
</dbReference>
<dbReference type="PANTHER" id="PTHR11228:SF7">
    <property type="entry name" value="PQQA PEPTIDE CYCLASE"/>
    <property type="match status" value="1"/>
</dbReference>
<dbReference type="PANTHER" id="PTHR11228">
    <property type="entry name" value="RADICAL SAM DOMAIN PROTEIN"/>
    <property type="match status" value="1"/>
</dbReference>
<dbReference type="Pfam" id="PF04055">
    <property type="entry name" value="Radical_SAM"/>
    <property type="match status" value="1"/>
</dbReference>
<dbReference type="Pfam" id="PF13186">
    <property type="entry name" value="SPASM"/>
    <property type="match status" value="1"/>
</dbReference>
<dbReference type="PIRSF" id="PIRSF037420">
    <property type="entry name" value="PQQ_syn_pqqE"/>
    <property type="match status" value="1"/>
</dbReference>
<dbReference type="SFLD" id="SFLDG01387">
    <property type="entry name" value="BtrN-like_SPASM_domain_contain"/>
    <property type="match status" value="1"/>
</dbReference>
<dbReference type="SFLD" id="SFLDF00316">
    <property type="entry name" value="C-terminal_tyrosine_decarboxyl"/>
    <property type="match status" value="1"/>
</dbReference>
<dbReference type="SFLD" id="SFLDG01072">
    <property type="entry name" value="dehydrogenase_like"/>
    <property type="match status" value="1"/>
</dbReference>
<dbReference type="SMART" id="SM00729">
    <property type="entry name" value="Elp3"/>
    <property type="match status" value="1"/>
</dbReference>
<dbReference type="SUPFAM" id="SSF102114">
    <property type="entry name" value="Radical SAM enzymes"/>
    <property type="match status" value="1"/>
</dbReference>
<dbReference type="PROSITE" id="PS51918">
    <property type="entry name" value="RADICAL_SAM"/>
    <property type="match status" value="1"/>
</dbReference>
<name>MFTC_MYCTU</name>
<gene>
    <name evidence="4" type="primary">mftC</name>
    <name type="ordered locus">Rv0693</name>
</gene>
<organism>
    <name type="scientific">Mycobacterium tuberculosis (strain ATCC 25618 / H37Rv)</name>
    <dbReference type="NCBI Taxonomy" id="83332"/>
    <lineage>
        <taxon>Bacteria</taxon>
        <taxon>Bacillati</taxon>
        <taxon>Actinomycetota</taxon>
        <taxon>Actinomycetes</taxon>
        <taxon>Mycobacteriales</taxon>
        <taxon>Mycobacteriaceae</taxon>
        <taxon>Mycobacterium</taxon>
        <taxon>Mycobacterium tuberculosis complex</taxon>
    </lineage>
</organism>
<protein>
    <recommendedName>
        <fullName>Mycofactocin maturase MftC</fullName>
    </recommendedName>
    <alternativeName>
        <fullName>[Mycofactocin precursor peptide]-pyrrolidinone derivative synthase</fullName>
        <ecNumber evidence="1">4.1.99.26</ecNumber>
    </alternativeName>
    <alternativeName>
        <fullName>[Mycofactocin precursor peptide]-tyrosine decarboxylase</fullName>
        <ecNumber evidence="1">1.3.98.7</ecNumber>
    </alternativeName>
</protein>
<evidence type="ECO:0000250" key="1">
    <source>
        <dbReference type="UniProtKB" id="A0PM49"/>
    </source>
</evidence>
<evidence type="ECO:0000255" key="2">
    <source>
        <dbReference type="PROSITE-ProRule" id="PRU01266"/>
    </source>
</evidence>
<evidence type="ECO:0000256" key="3">
    <source>
        <dbReference type="SAM" id="MobiDB-lite"/>
    </source>
</evidence>
<evidence type="ECO:0000303" key="4">
    <source>
    </source>
</evidence>
<evidence type="ECO:0000305" key="5"/>
<accession>P9WJ79</accession>
<accession>L0T7F8</accession>
<accession>P95039</accession>
<accession>Q7D9E9</accession>
<keyword id="KW-0004">4Fe-4S</keyword>
<keyword id="KW-0408">Iron</keyword>
<keyword id="KW-0411">Iron-sulfur</keyword>
<keyword id="KW-0456">Lyase</keyword>
<keyword id="KW-0479">Metal-binding</keyword>
<keyword id="KW-0560">Oxidoreductase</keyword>
<keyword id="KW-1185">Reference proteome</keyword>
<keyword id="KW-0949">S-adenosyl-L-methionine</keyword>
<sequence>MTSPVPRLIEQFERGLDAPICLTWELTYACNLACVHCLSSSGKRDPGELSTRQCKDIIDELERMQVFYVNIGGGEPTVRPDFWELVDYATAHHVGVKFSTNGVRITPEVATRLAATDYVDVQISLDGATAEVNDAIRGTGSFDMAVRALQNLAAAGFAGVKISVVITRRNVAQLDEFATLASRYGATLRITRLRPSGRGTDVWADLHPTADQQVQLYDWLVSKGERVLTGDSFFHLAPLGQSGALAGLNMCGAGRVVCLIDPVGDVYACPFAIHDHFLAGNVLSDGGFQNVWKNSSLFRELREPQSAGACGSCGHYDSCRGGCMAAKFFTGLPLDGPDPECVQGHSEPALARERHLPRPRADHSRGRRVSKPVPLTLSMRPPKRPCNESPV</sequence>
<feature type="chain" id="PRO_0000415281" description="Mycofactocin maturase MftC">
    <location>
        <begin position="1"/>
        <end position="391"/>
    </location>
</feature>
<feature type="domain" description="Radical SAM core" evidence="2">
    <location>
        <begin position="16"/>
        <end position="232"/>
    </location>
</feature>
<feature type="region of interest" description="Disordered" evidence="3">
    <location>
        <begin position="340"/>
        <end position="391"/>
    </location>
</feature>
<feature type="compositionally biased region" description="Basic and acidic residues" evidence="3">
    <location>
        <begin position="350"/>
        <end position="364"/>
    </location>
</feature>
<feature type="binding site" evidence="1">
    <location>
        <position position="30"/>
    </location>
    <ligand>
        <name>[4Fe-4S] cluster</name>
        <dbReference type="ChEBI" id="CHEBI:49883"/>
        <label>1</label>
        <note>4Fe-4S-S-AdoMet</note>
    </ligand>
</feature>
<feature type="binding site" evidence="1">
    <location>
        <position position="34"/>
    </location>
    <ligand>
        <name>[4Fe-4S] cluster</name>
        <dbReference type="ChEBI" id="CHEBI:49883"/>
        <label>1</label>
        <note>4Fe-4S-S-AdoMet</note>
    </ligand>
</feature>
<feature type="binding site" evidence="1">
    <location>
        <position position="37"/>
    </location>
    <ligand>
        <name>[4Fe-4S] cluster</name>
        <dbReference type="ChEBI" id="CHEBI:49883"/>
        <label>1</label>
        <note>4Fe-4S-S-AdoMet</note>
    </ligand>
</feature>
<feature type="binding site" evidence="1">
    <location>
        <position position="251"/>
    </location>
    <ligand>
        <name>[4Fe-4S] cluster</name>
        <dbReference type="ChEBI" id="CHEBI:49883"/>
        <label>2</label>
    </ligand>
</feature>
<feature type="binding site" evidence="1">
    <location>
        <position position="258"/>
    </location>
    <ligand>
        <name>[4Fe-4S] cluster</name>
        <dbReference type="ChEBI" id="CHEBI:49883"/>
        <label>2</label>
    </ligand>
</feature>
<feature type="binding site" evidence="1">
    <location>
        <position position="269"/>
    </location>
    <ligand>
        <name>[4Fe-4S] cluster</name>
        <dbReference type="ChEBI" id="CHEBI:49883"/>
        <label>2</label>
    </ligand>
</feature>
<feature type="binding site" evidence="1">
    <location>
        <position position="310"/>
    </location>
    <ligand>
        <name>[4Fe-4S] cluster</name>
        <dbReference type="ChEBI" id="CHEBI:49883"/>
        <label>3</label>
    </ligand>
</feature>
<feature type="binding site" evidence="1">
    <location>
        <position position="313"/>
    </location>
    <ligand>
        <name>[4Fe-4S] cluster</name>
        <dbReference type="ChEBI" id="CHEBI:49883"/>
        <label>3</label>
    </ligand>
</feature>
<feature type="binding site" evidence="1">
    <location>
        <position position="319"/>
    </location>
    <ligand>
        <name>[4Fe-4S] cluster</name>
        <dbReference type="ChEBI" id="CHEBI:49883"/>
        <label>3</label>
    </ligand>
</feature>
<feature type="binding site" evidence="1">
    <location>
        <position position="323"/>
    </location>
    <ligand>
        <name>[4Fe-4S] cluster</name>
        <dbReference type="ChEBI" id="CHEBI:49883"/>
        <label>2</label>
    </ligand>
</feature>
<feature type="binding site" evidence="1">
    <location>
        <position position="341"/>
    </location>
    <ligand>
        <name>[4Fe-4S] cluster</name>
        <dbReference type="ChEBI" id="CHEBI:49883"/>
        <label>3</label>
    </ligand>
</feature>
<comment type="function">
    <text evidence="1">Radical S-adenosylmethionine (SAM) enzyme responsible for the first step of the biosynthesis of the enzyme cofactor mycofactocin (MFT). Catalyzes two reactions at the C-terminus of the mycofactocin precursor (the MftA peptide). The first one is the oxidative decarboxylation of the C-terminal L-tyrosine of MftA, forming an unsaturated tyramine moiety. The second reaction is the cross-linking of the tyramine with the penultimate L-valine residue, forming a five-membered lactam ring. Its activity requires the presence of the MftB chaperone.</text>
</comment>
<comment type="catalytic activity">
    <reaction evidence="1">
        <text>[mycofactocin precursor peptide]-C-terminal glycyl-L-valyl-L-tyrosine + S-adenosyl-L-methionine = [mycofactocin precursor peptide]-C-terminal glycyl-N-{[2-(4-hydroxyphenyl)ethenyl]-3-methylbutanamide} + 5'-deoxyadenosine + L-methionine + CO2</text>
        <dbReference type="Rhea" id="RHEA:65492"/>
        <dbReference type="Rhea" id="RHEA-COMP:16815"/>
        <dbReference type="Rhea" id="RHEA-COMP:16816"/>
        <dbReference type="ChEBI" id="CHEBI:16526"/>
        <dbReference type="ChEBI" id="CHEBI:17319"/>
        <dbReference type="ChEBI" id="CHEBI:57844"/>
        <dbReference type="ChEBI" id="CHEBI:59789"/>
        <dbReference type="ChEBI" id="CHEBI:156515"/>
        <dbReference type="ChEBI" id="CHEBI:156517"/>
        <dbReference type="EC" id="1.3.98.7"/>
    </reaction>
</comment>
<comment type="catalytic activity">
    <reaction evidence="1">
        <text>[mycofactocin precursor peptide]-C-terminal glycyl-N-{[2-(4-hydroxyphenyl)ethenyl]-3-methylbutanamide} + AH2 + S-adenosyl-L-methionine = [mycofactocin precursor peptide]-C-terminal glycyl-N-{5-[(4-hydroxyphenyl)methyl]-4,4-dimethyl-2-oxopyrrolidin-3-yl}acetamide + 5'-deoxyadenosine + L-methionine + A + H(+)</text>
        <dbReference type="Rhea" id="RHEA:65500"/>
        <dbReference type="Rhea" id="RHEA-COMP:16816"/>
        <dbReference type="Rhea" id="RHEA-COMP:16818"/>
        <dbReference type="ChEBI" id="CHEBI:13193"/>
        <dbReference type="ChEBI" id="CHEBI:15378"/>
        <dbReference type="ChEBI" id="CHEBI:17319"/>
        <dbReference type="ChEBI" id="CHEBI:17499"/>
        <dbReference type="ChEBI" id="CHEBI:57844"/>
        <dbReference type="ChEBI" id="CHEBI:59789"/>
        <dbReference type="ChEBI" id="CHEBI:156517"/>
        <dbReference type="ChEBI" id="CHEBI:156518"/>
        <dbReference type="EC" id="4.1.99.26"/>
    </reaction>
</comment>
<comment type="cofactor">
    <cofactor evidence="1">
        <name>[4Fe-4S] cluster</name>
        <dbReference type="ChEBI" id="CHEBI:49883"/>
    </cofactor>
    <text evidence="1">Binds 3 [4Fe-4S] clusters. One cluster is coordinated with 3 cysteines and an exchangeable S-adenosyl-L-methionine. All three [Fe-S] clusters are required for MftC modification of MftA.</text>
</comment>
<comment type="similarity">
    <text evidence="5">Belongs to the radical SAM superfamily. MftC family.</text>
</comment>
<proteinExistence type="evidence at protein level"/>